<protein>
    <recommendedName>
        <fullName>Cytochrome P450 78A6</fullName>
        <ecNumber>1.14.-.-</ecNumber>
    </recommendedName>
    <alternativeName>
        <fullName>Protein ENHANCER OF DA1-1</fullName>
    </alternativeName>
</protein>
<keyword id="KW-0217">Developmental protein</keyword>
<keyword id="KW-0341">Growth regulation</keyword>
<keyword id="KW-0349">Heme</keyword>
<keyword id="KW-0408">Iron</keyword>
<keyword id="KW-0472">Membrane</keyword>
<keyword id="KW-0479">Metal-binding</keyword>
<keyword id="KW-0503">Monooxygenase</keyword>
<keyword id="KW-0560">Oxidoreductase</keyword>
<keyword id="KW-1185">Reference proteome</keyword>
<keyword id="KW-0812">Transmembrane</keyword>
<keyword id="KW-1133">Transmembrane helix</keyword>
<dbReference type="EC" id="1.14.-.-"/>
<dbReference type="EMBL" id="AC005819">
    <property type="protein sequence ID" value="AAC69923.1"/>
    <property type="molecule type" value="Genomic_DNA"/>
</dbReference>
<dbReference type="EMBL" id="AC006418">
    <property type="protein sequence ID" value="AAM15240.1"/>
    <property type="molecule type" value="Genomic_DNA"/>
</dbReference>
<dbReference type="EMBL" id="CP002685">
    <property type="protein sequence ID" value="AEC10736.1"/>
    <property type="molecule type" value="Genomic_DNA"/>
</dbReference>
<dbReference type="EMBL" id="AK226763">
    <property type="protein sequence ID" value="BAE98862.1"/>
    <property type="molecule type" value="mRNA"/>
</dbReference>
<dbReference type="PIR" id="F84905">
    <property type="entry name" value="F84905"/>
</dbReference>
<dbReference type="RefSeq" id="NP_182189.1">
    <property type="nucleotide sequence ID" value="NM_130231.4"/>
</dbReference>
<dbReference type="SMR" id="Q9ZNR0"/>
<dbReference type="FunCoup" id="Q9ZNR0">
    <property type="interactions" value="116"/>
</dbReference>
<dbReference type="STRING" id="3702.Q9ZNR0"/>
<dbReference type="PaxDb" id="3702-AT2G46660.1"/>
<dbReference type="EnsemblPlants" id="AT2G46660.1">
    <property type="protein sequence ID" value="AT2G46660.1"/>
    <property type="gene ID" value="AT2G46660"/>
</dbReference>
<dbReference type="GeneID" id="819278"/>
<dbReference type="Gramene" id="AT2G46660.1">
    <property type="protein sequence ID" value="AT2G46660.1"/>
    <property type="gene ID" value="AT2G46660"/>
</dbReference>
<dbReference type="KEGG" id="ath:AT2G46660"/>
<dbReference type="Araport" id="AT2G46660"/>
<dbReference type="TAIR" id="AT2G46660">
    <property type="gene designation" value="CYP78A6"/>
</dbReference>
<dbReference type="eggNOG" id="KOG0156">
    <property type="taxonomic scope" value="Eukaryota"/>
</dbReference>
<dbReference type="HOGENOM" id="CLU_001570_4_0_1"/>
<dbReference type="InParanoid" id="Q9ZNR0"/>
<dbReference type="OMA" id="PKPYYLK"/>
<dbReference type="PhylomeDB" id="Q9ZNR0"/>
<dbReference type="BioCyc" id="ARA:AT2G46660-MONOMER"/>
<dbReference type="PRO" id="PR:Q9ZNR0"/>
<dbReference type="Proteomes" id="UP000006548">
    <property type="component" value="Chromosome 2"/>
</dbReference>
<dbReference type="ExpressionAtlas" id="Q9ZNR0">
    <property type="expression patterns" value="baseline and differential"/>
</dbReference>
<dbReference type="GO" id="GO:0016020">
    <property type="term" value="C:membrane"/>
    <property type="evidence" value="ECO:0007669"/>
    <property type="project" value="UniProtKB-SubCell"/>
</dbReference>
<dbReference type="GO" id="GO:0020037">
    <property type="term" value="F:heme binding"/>
    <property type="evidence" value="ECO:0007669"/>
    <property type="project" value="InterPro"/>
</dbReference>
<dbReference type="GO" id="GO:0005506">
    <property type="term" value="F:iron ion binding"/>
    <property type="evidence" value="ECO:0007669"/>
    <property type="project" value="InterPro"/>
</dbReference>
<dbReference type="GO" id="GO:0004497">
    <property type="term" value="F:monooxygenase activity"/>
    <property type="evidence" value="ECO:0007669"/>
    <property type="project" value="UniProtKB-KW"/>
</dbReference>
<dbReference type="GO" id="GO:0016705">
    <property type="term" value="F:oxidoreductase activity, acting on paired donors, with incorporation or reduction of molecular oxygen"/>
    <property type="evidence" value="ECO:0007669"/>
    <property type="project" value="InterPro"/>
</dbReference>
<dbReference type="GO" id="GO:0048316">
    <property type="term" value="P:seed development"/>
    <property type="evidence" value="ECO:0000315"/>
    <property type="project" value="TAIR"/>
</dbReference>
<dbReference type="CDD" id="cd11076">
    <property type="entry name" value="CYP78"/>
    <property type="match status" value="1"/>
</dbReference>
<dbReference type="FunFam" id="1.10.630.10:FF:000016">
    <property type="entry name" value="Cytochrome P450 78A5"/>
    <property type="match status" value="1"/>
</dbReference>
<dbReference type="Gene3D" id="1.10.630.10">
    <property type="entry name" value="Cytochrome P450"/>
    <property type="match status" value="1"/>
</dbReference>
<dbReference type="InterPro" id="IPR001128">
    <property type="entry name" value="Cyt_P450"/>
</dbReference>
<dbReference type="InterPro" id="IPR017972">
    <property type="entry name" value="Cyt_P450_CS"/>
</dbReference>
<dbReference type="InterPro" id="IPR002401">
    <property type="entry name" value="Cyt_P450_E_grp-I"/>
</dbReference>
<dbReference type="InterPro" id="IPR036396">
    <property type="entry name" value="Cyt_P450_sf"/>
</dbReference>
<dbReference type="InterPro" id="IPR051996">
    <property type="entry name" value="Cytochrome_P450_78A"/>
</dbReference>
<dbReference type="PANTHER" id="PTHR47946:SF29">
    <property type="entry name" value="CYTOCHROME P450 78A6"/>
    <property type="match status" value="1"/>
</dbReference>
<dbReference type="PANTHER" id="PTHR47946">
    <property type="entry name" value="CYTOCHROME P450 78A7-RELATED"/>
    <property type="match status" value="1"/>
</dbReference>
<dbReference type="Pfam" id="PF00067">
    <property type="entry name" value="p450"/>
    <property type="match status" value="1"/>
</dbReference>
<dbReference type="PRINTS" id="PR00463">
    <property type="entry name" value="EP450I"/>
</dbReference>
<dbReference type="PRINTS" id="PR00385">
    <property type="entry name" value="P450"/>
</dbReference>
<dbReference type="SUPFAM" id="SSF48264">
    <property type="entry name" value="Cytochrome P450"/>
    <property type="match status" value="1"/>
</dbReference>
<dbReference type="PROSITE" id="PS00086">
    <property type="entry name" value="CYTOCHROME_P450"/>
    <property type="match status" value="1"/>
</dbReference>
<name>C78A6_ARATH</name>
<feature type="chain" id="PRO_0000422988" description="Cytochrome P450 78A6">
    <location>
        <begin position="1"/>
        <end position="530"/>
    </location>
</feature>
<feature type="transmembrane region" description="Helical" evidence="2">
    <location>
        <begin position="25"/>
        <end position="45"/>
    </location>
</feature>
<feature type="binding site" description="axial binding residue" evidence="1">
    <location>
        <position position="474"/>
    </location>
    <ligand>
        <name>heme</name>
        <dbReference type="ChEBI" id="CHEBI:30413"/>
    </ligand>
    <ligandPart>
        <name>Fe</name>
        <dbReference type="ChEBI" id="CHEBI:18248"/>
    </ligandPart>
</feature>
<reference key="1">
    <citation type="journal article" date="1999" name="Nature">
        <title>Sequence and analysis of chromosome 2 of the plant Arabidopsis thaliana.</title>
        <authorList>
            <person name="Lin X."/>
            <person name="Kaul S."/>
            <person name="Rounsley S.D."/>
            <person name="Shea T.P."/>
            <person name="Benito M.-I."/>
            <person name="Town C.D."/>
            <person name="Fujii C.Y."/>
            <person name="Mason T.M."/>
            <person name="Bowman C.L."/>
            <person name="Barnstead M.E."/>
            <person name="Feldblyum T.V."/>
            <person name="Buell C.R."/>
            <person name="Ketchum K.A."/>
            <person name="Lee J.J."/>
            <person name="Ronning C.M."/>
            <person name="Koo H.L."/>
            <person name="Moffat K.S."/>
            <person name="Cronin L.A."/>
            <person name="Shen M."/>
            <person name="Pai G."/>
            <person name="Van Aken S."/>
            <person name="Umayam L."/>
            <person name="Tallon L.J."/>
            <person name="Gill J.E."/>
            <person name="Adams M.D."/>
            <person name="Carrera A.J."/>
            <person name="Creasy T.H."/>
            <person name="Goodman H.M."/>
            <person name="Somerville C.R."/>
            <person name="Copenhaver G.P."/>
            <person name="Preuss D."/>
            <person name="Nierman W.C."/>
            <person name="White O."/>
            <person name="Eisen J.A."/>
            <person name="Salzberg S.L."/>
            <person name="Fraser C.M."/>
            <person name="Venter J.C."/>
        </authorList>
    </citation>
    <scope>NUCLEOTIDE SEQUENCE [LARGE SCALE GENOMIC DNA]</scope>
    <source>
        <strain>cv. Columbia</strain>
    </source>
</reference>
<reference key="2">
    <citation type="journal article" date="2017" name="Plant J.">
        <title>Araport11: a complete reannotation of the Arabidopsis thaliana reference genome.</title>
        <authorList>
            <person name="Cheng C.Y."/>
            <person name="Krishnakumar V."/>
            <person name="Chan A.P."/>
            <person name="Thibaud-Nissen F."/>
            <person name="Schobel S."/>
            <person name="Town C.D."/>
        </authorList>
    </citation>
    <scope>GENOME REANNOTATION</scope>
    <source>
        <strain>cv. Columbia</strain>
    </source>
</reference>
<reference key="3">
    <citation type="submission" date="2006-07" db="EMBL/GenBank/DDBJ databases">
        <title>Large-scale analysis of RIKEN Arabidopsis full-length (RAFL) cDNAs.</title>
        <authorList>
            <person name="Totoki Y."/>
            <person name="Seki M."/>
            <person name="Ishida J."/>
            <person name="Nakajima M."/>
            <person name="Enju A."/>
            <person name="Kamiya A."/>
            <person name="Narusaka M."/>
            <person name="Shin-i T."/>
            <person name="Nakagawa M."/>
            <person name="Sakamoto N."/>
            <person name="Oishi K."/>
            <person name="Kohara Y."/>
            <person name="Kobayashi M."/>
            <person name="Toyoda A."/>
            <person name="Sakaki Y."/>
            <person name="Sakurai T."/>
            <person name="Iida K."/>
            <person name="Akiyama K."/>
            <person name="Satou M."/>
            <person name="Toyoda T."/>
            <person name="Konagaya A."/>
            <person name="Carninci P."/>
            <person name="Kawai J."/>
            <person name="Hayashizaki Y."/>
            <person name="Shinozaki K."/>
        </authorList>
    </citation>
    <scope>NUCLEOTIDE SEQUENCE [LARGE SCALE MRNA]</scope>
    <source>
        <strain>cv. Columbia</strain>
    </source>
</reference>
<reference key="4">
    <citation type="journal article" date="2012" name="Plant J.">
        <title>Maternal control of seed size by EOD3/CYP78A6 in Arabidopsis thaliana.</title>
        <authorList>
            <person name="Fang W."/>
            <person name="Wang Z."/>
            <person name="Cui R."/>
            <person name="Li J."/>
            <person name="Li Y."/>
        </authorList>
    </citation>
    <scope>FUNCTION</scope>
    <scope>TISSUE SPECIFICITY</scope>
    <scope>DISRUPTION PHENOTYPE</scope>
</reference>
<proteinExistence type="evidence at transcript level"/>
<comment type="function">
    <text evidence="3">Plays a role in seed and fruit development. Functions probably in association with CYP78A9 in the regulation of seed growth. Acts maternally to promote seed growth.</text>
</comment>
<comment type="cofactor">
    <cofactor evidence="1">
        <name>heme</name>
        <dbReference type="ChEBI" id="CHEBI:30413"/>
    </cofactor>
</comment>
<comment type="subcellular location">
    <subcellularLocation>
        <location evidence="4">Membrane</location>
        <topology evidence="4">Single-pass membrane protein</topology>
    </subcellularLocation>
</comment>
<comment type="tissue specificity">
    <text evidence="3">Expressed in leaves, sepals, petals, stamens, carpels and developing ovules.</text>
</comment>
<comment type="disruption phenotype">
    <text evidence="3">Reduced seed size.</text>
</comment>
<comment type="miscellaneous">
    <text evidence="5">The gain of function mutants eod3-1D (T-DNA tagging) show increased size of leaves, flowers and seeds, but defects in reproductive development.</text>
</comment>
<comment type="similarity">
    <text evidence="4">Belongs to the cytochrome P450 family.</text>
</comment>
<gene>
    <name type="primary">CYP78A6</name>
    <name type="synonym">EOD3</name>
    <name type="ordered locus">At2g46660</name>
    <name type="ORF">T3A4.4</name>
</gene>
<evidence type="ECO:0000250" key="1"/>
<evidence type="ECO:0000255" key="2"/>
<evidence type="ECO:0000269" key="3">
    <source>
    </source>
</evidence>
<evidence type="ECO:0000305" key="4"/>
<evidence type="ECO:0000305" key="5">
    <source>
    </source>
</evidence>
<accession>Q9ZNR0</accession>
<sequence length="530" mass="59565">MATKLESSLIFALLSKCSVLSQTNLAFSLLAVTIIWLAISLFLWTYPGGPAWGKYLFGRLISGSYKTGNVIPGPKGFPLVGSMSLMSSTLAHRRIADAAEKFGAKRLMAFSLGETRVIVTCNPDVAKEILNSPVFADRPVKESAYSLMFNRAIGFAPHGVYWRTLRRIASNHLFSTKQIRRAETQRRVISSQMVEFLEKQSSNEPCFVRELLKTASLNNMMCSVFGQEYELEKNHVELREMVEEGYDLLGTLNWTDHLPWLSEFDPQRLRSRCSTLVPKVNRFVSRIISEHRNQTGDLPRDFVDVLLSLHGSDKLSDPDIIAVLWEMIFRGTDTVAVLIEWILARMVLHPDMQSTVQNELDQVVGKSRALDESDLASLPYLTAVVKEVLRLHPPGPLLSWARLAITDTIVDGRLVPAGTTAMVNMWAVSHDPHVWVDPLEFKPERFVAKEGEVEFSVLGSDLRLAPFGSGRRICPGKNLGFTTVMFWTAMMLHEFEWGPSDGNGVDLSEKLRLSCEMANPLPAKLRRRRS</sequence>
<organism>
    <name type="scientific">Arabidopsis thaliana</name>
    <name type="common">Mouse-ear cress</name>
    <dbReference type="NCBI Taxonomy" id="3702"/>
    <lineage>
        <taxon>Eukaryota</taxon>
        <taxon>Viridiplantae</taxon>
        <taxon>Streptophyta</taxon>
        <taxon>Embryophyta</taxon>
        <taxon>Tracheophyta</taxon>
        <taxon>Spermatophyta</taxon>
        <taxon>Magnoliopsida</taxon>
        <taxon>eudicotyledons</taxon>
        <taxon>Gunneridae</taxon>
        <taxon>Pentapetalae</taxon>
        <taxon>rosids</taxon>
        <taxon>malvids</taxon>
        <taxon>Brassicales</taxon>
        <taxon>Brassicaceae</taxon>
        <taxon>Camelineae</taxon>
        <taxon>Arabidopsis</taxon>
    </lineage>
</organism>